<protein>
    <recommendedName>
        <fullName>Aprataxin</fullName>
        <ecNumber evidence="4">3.6.1.71</ecNumber>
        <ecNumber evidence="2">3.6.1.72</ecNumber>
    </recommendedName>
    <alternativeName>
        <fullName>Forkhead-associated domain histidine triad-like protein</fullName>
        <shortName>FHA-HIT</shortName>
    </alternativeName>
</protein>
<feature type="chain" id="PRO_0000109837" description="Aprataxin">
    <location>
        <begin position="1"/>
        <end position="342"/>
    </location>
</feature>
<feature type="domain" description="FHA-like">
    <location>
        <begin position="24"/>
        <end position="73"/>
    </location>
</feature>
<feature type="domain" description="HIT" evidence="5">
    <location>
        <begin position="168"/>
        <end position="273"/>
    </location>
</feature>
<feature type="zinc finger region" description="C2H2-type">
    <location>
        <begin position="317"/>
        <end position="339"/>
    </location>
</feature>
<feature type="region of interest" description="Interactions with ADPRT/PARP1 and NCL" evidence="1">
    <location>
        <begin position="1"/>
        <end position="96"/>
    </location>
</feature>
<feature type="region of interest" description="Disordered" evidence="6">
    <location>
        <begin position="105"/>
        <end position="167"/>
    </location>
</feature>
<feature type="region of interest" description="Interaction with DNA substrate" evidence="4">
    <location>
        <begin position="193"/>
        <end position="197"/>
    </location>
</feature>
<feature type="region of interest" description="Interaction with DNA substrate" evidence="4">
    <location>
        <begin position="255"/>
        <end position="256"/>
    </location>
</feature>
<feature type="short sequence motif" description="Nuclear localization signal" evidence="1">
    <location>
        <begin position="112"/>
        <end position="117"/>
    </location>
</feature>
<feature type="short sequence motif" description="Histidine triad motif">
    <location>
        <begin position="258"/>
        <end position="262"/>
    </location>
</feature>
<feature type="compositionally biased region" description="Polar residues" evidence="6">
    <location>
        <begin position="132"/>
        <end position="149"/>
    </location>
</feature>
<feature type="compositionally biased region" description="Basic and acidic residues" evidence="6">
    <location>
        <begin position="153"/>
        <end position="164"/>
    </location>
</feature>
<feature type="active site" description="Tele-AMP-histidine intermediate" evidence="4">
    <location>
        <position position="260"/>
    </location>
</feature>
<feature type="site" description="Interaction with DNA substrate" evidence="4">
    <location>
        <position position="174"/>
    </location>
</feature>
<feature type="site" description="Interaction with DNA substrate" evidence="4">
    <location>
        <position position="251"/>
    </location>
</feature>
<feature type="site" description="Interaction with DNA substrate" evidence="4">
    <location>
        <position position="262"/>
    </location>
</feature>
<feature type="site" description="Interaction with DNA substrate" evidence="4">
    <location>
        <position position="277"/>
    </location>
</feature>
<feature type="modified residue" description="Phosphoserine" evidence="4">
    <location>
        <position position="118"/>
    </location>
</feature>
<feature type="modified residue" description="Phosphoserine" evidence="3">
    <location>
        <position position="123"/>
    </location>
</feature>
<comment type="function">
    <text evidence="2 4">DNA-binding protein involved in single-strand DNA break repair, double-strand DNA break repair and base excision repair. Resolves abortive DNA ligation intermediates formed either at base excision sites, or when DNA ligases attempt to repair non-ligatable breaks induced by reactive oxygen species. Catalyzes the release of adenylate groups covalently linked to 5'-phosphate termini, resulting in the production of 5'-phosphate termini that can be efficiently rejoined. Also able to hydrolyze adenosine 5'-monophosphoramidate (AMP-NH(2)) and diadenosine tetraphosphate (AppppA), but with lower catalytic activity (By similarity). Likewise, catalyzes the release of 3'-linked guanosine (DNAppG) and inosine (DNAppI) from DNA, but has higher specific activity with 5'-linked adenosine (AppDNA) (By similarity).</text>
</comment>
<comment type="catalytic activity">
    <reaction evidence="4">
        <text>a 5'-end adenosine-5'-diphospho-5'-2'-deoxyribonucleoside-DNA + H2O = a 5'-end 5'-phospho-2'-deoxyribonucleoside-DNA + AMP + 2 H(+)</text>
        <dbReference type="Rhea" id="RHEA:52128"/>
        <dbReference type="Rhea" id="RHEA-COMP:13180"/>
        <dbReference type="Rhea" id="RHEA-COMP:13181"/>
        <dbReference type="ChEBI" id="CHEBI:15377"/>
        <dbReference type="ChEBI" id="CHEBI:15378"/>
        <dbReference type="ChEBI" id="CHEBI:136412"/>
        <dbReference type="ChEBI" id="CHEBI:136413"/>
        <dbReference type="ChEBI" id="CHEBI:456215"/>
        <dbReference type="EC" id="3.6.1.71"/>
    </reaction>
</comment>
<comment type="catalytic activity">
    <reaction evidence="4">
        <text>a 5'-end adenosine-5'-diphospho-5'-ribonucleoside-2'-deoxyribonucleotide-DNA + H2O = a 5'-end 5'-phospho-ribonucleoside-2'-deoxyribonucleotide-DNA + AMP + 2 H(+)</text>
        <dbReference type="Rhea" id="RHEA:52132"/>
        <dbReference type="Rhea" id="RHEA-COMP:13182"/>
        <dbReference type="Rhea" id="RHEA-COMP:13183"/>
        <dbReference type="ChEBI" id="CHEBI:15377"/>
        <dbReference type="ChEBI" id="CHEBI:15378"/>
        <dbReference type="ChEBI" id="CHEBI:136414"/>
        <dbReference type="ChEBI" id="CHEBI:136415"/>
        <dbReference type="ChEBI" id="CHEBI:456215"/>
        <dbReference type="EC" id="3.6.1.71"/>
    </reaction>
</comment>
<comment type="catalytic activity">
    <reaction evidence="2">
        <text>a 3'-end 2'-deoxyribonucleotide-3'-diphospho-5'-guanosine-DNA + H2O = a 3'-end 2'-deoxyribonucleotide 3'-phosphate-DNA + GMP + 2 H(+)</text>
        <dbReference type="Rhea" id="RHEA:52140"/>
        <dbReference type="Rhea" id="RHEA-COMP:13186"/>
        <dbReference type="Rhea" id="RHEA-COMP:13187"/>
        <dbReference type="ChEBI" id="CHEBI:15377"/>
        <dbReference type="ChEBI" id="CHEBI:15378"/>
        <dbReference type="ChEBI" id="CHEBI:58115"/>
        <dbReference type="ChEBI" id="CHEBI:136419"/>
        <dbReference type="ChEBI" id="CHEBI:136420"/>
        <dbReference type="EC" id="3.6.1.72"/>
    </reaction>
</comment>
<comment type="subunit">
    <text evidence="4">Interacts with single-strand break repair proteins XRCC1, XRCC4, ADPRT/PARP1 and p53/TP53. Interacts with NCL. Interacts (via FHA-like domain) with MDC1 (phosphorylated).</text>
</comment>
<comment type="subcellular location">
    <subcellularLocation>
        <location evidence="4">Nucleus</location>
        <location evidence="4">Nucleoplasm</location>
    </subcellularLocation>
    <subcellularLocation>
        <location evidence="4">Nucleus</location>
        <location evidence="4">Nucleolus</location>
    </subcellularLocation>
    <text evidence="4">Upon genotoxic stress, colocalizes with XRCC1 at sites of DNA damage. Colocalizes with MDC1 at sites of DNA double-strand breaks. Interaction with NCL is required for nucleolar localization (By similarity).</text>
</comment>
<comment type="domain">
    <text evidence="4">The histidine triad, also called HIT motif, forms part of the binding loop for the alpha-phosphate of purine mononucleotide.</text>
</comment>
<comment type="domain">
    <text evidence="1">The FHA-like domain mediates interaction with NCL; XRCC1 and XRCC4.</text>
</comment>
<comment type="domain">
    <text evidence="1">The HIT domain is required for enzymatic activity.</text>
</comment>
<comment type="domain">
    <text evidence="1">The C2H2-type zinc finger mediates DNA-binding.</text>
</comment>
<gene>
    <name type="primary">APTX</name>
</gene>
<accession>P61797</accession>
<name>APTX_CANLF</name>
<sequence>MMRMCWLVRQDNQHQRIKLPHLEAVMVGRGPETKIIDKKCSRQQVQLKAECNKGYVKVKQVGVNPTSIDSVIIGKDQEAKLQPGQVLHMVNELYPYIVEFEEEAESPGLETHRKRKRSGNSDSIERDAAQEAESSTGLEPGSDSSQCSVPLNKGKDAPTKKESLGHWSQGLKISMQDPKMQVYKDEQVVVIKDKYPKARYHWLVLPWASVSSLKAVTGEHLELLKHMHTVGEKMIADFAGSSKLRFRLGYHAIPSMSHVHLHVISQDFDSPCLKNKKHWNSFNTEYFLESQAVIEMVQHAGRVSVRDGMPELLKLPLRCHECQQLLPSIPQLKEHLRRHWPK</sequence>
<organism>
    <name type="scientific">Canis lupus familiaris</name>
    <name type="common">Dog</name>
    <name type="synonym">Canis familiaris</name>
    <dbReference type="NCBI Taxonomy" id="9615"/>
    <lineage>
        <taxon>Eukaryota</taxon>
        <taxon>Metazoa</taxon>
        <taxon>Chordata</taxon>
        <taxon>Craniata</taxon>
        <taxon>Vertebrata</taxon>
        <taxon>Euteleostomi</taxon>
        <taxon>Mammalia</taxon>
        <taxon>Eutheria</taxon>
        <taxon>Laurasiatheria</taxon>
        <taxon>Carnivora</taxon>
        <taxon>Caniformia</taxon>
        <taxon>Canidae</taxon>
        <taxon>Canis</taxon>
    </lineage>
</organism>
<keyword id="KW-0227">DNA damage</keyword>
<keyword id="KW-0234">DNA repair</keyword>
<keyword id="KW-0238">DNA-binding</keyword>
<keyword id="KW-0378">Hydrolase</keyword>
<keyword id="KW-0479">Metal-binding</keyword>
<keyword id="KW-0539">Nucleus</keyword>
<keyword id="KW-0597">Phosphoprotein</keyword>
<keyword id="KW-1185">Reference proteome</keyword>
<keyword id="KW-0862">Zinc</keyword>
<keyword id="KW-0863">Zinc-finger</keyword>
<evidence type="ECO:0000250" key="1"/>
<evidence type="ECO:0000250" key="2">
    <source>
        <dbReference type="UniProtKB" id="O74859"/>
    </source>
</evidence>
<evidence type="ECO:0000250" key="3">
    <source>
        <dbReference type="UniProtKB" id="Q7TQC5"/>
    </source>
</evidence>
<evidence type="ECO:0000250" key="4">
    <source>
        <dbReference type="UniProtKB" id="Q7Z2E3"/>
    </source>
</evidence>
<evidence type="ECO:0000255" key="5">
    <source>
        <dbReference type="PROSITE-ProRule" id="PRU00464"/>
    </source>
</evidence>
<evidence type="ECO:0000256" key="6">
    <source>
        <dbReference type="SAM" id="MobiDB-lite"/>
    </source>
</evidence>
<proteinExistence type="evidence at transcript level"/>
<reference key="1">
    <citation type="submission" date="2002-12" db="EMBL/GenBank/DDBJ databases">
        <title>Identification of human FHA-HIT gene homolog in dog.</title>
        <authorList>
            <person name="Chen Y."/>
            <person name="Huang C.-H."/>
        </authorList>
    </citation>
    <scope>NUCLEOTIDE SEQUENCE [MRNA]</scope>
</reference>
<dbReference type="EC" id="3.6.1.71" evidence="4"/>
<dbReference type="EC" id="3.6.1.72" evidence="2"/>
<dbReference type="EMBL" id="AY208843">
    <property type="protein sequence ID" value="AAP86333.1"/>
    <property type="molecule type" value="mRNA"/>
</dbReference>
<dbReference type="RefSeq" id="NP_001003355.1">
    <property type="nucleotide sequence ID" value="NM_001003355.1"/>
</dbReference>
<dbReference type="SMR" id="P61797"/>
<dbReference type="FunCoup" id="P61797">
    <property type="interactions" value="1239"/>
</dbReference>
<dbReference type="STRING" id="9615.ENSCAFP00000051773"/>
<dbReference type="PaxDb" id="9612-ENSCAFP00000002638"/>
<dbReference type="GeneID" id="442943"/>
<dbReference type="KEGG" id="cfa:442943"/>
<dbReference type="CTD" id="54840"/>
<dbReference type="eggNOG" id="KOG0562">
    <property type="taxonomic scope" value="Eukaryota"/>
</dbReference>
<dbReference type="eggNOG" id="KOG2134">
    <property type="taxonomic scope" value="Eukaryota"/>
</dbReference>
<dbReference type="InParanoid" id="P61797"/>
<dbReference type="OrthoDB" id="3512845at2759"/>
<dbReference type="Proteomes" id="UP000002254">
    <property type="component" value="Unplaced"/>
</dbReference>
<dbReference type="Proteomes" id="UP000694429">
    <property type="component" value="Unplaced"/>
</dbReference>
<dbReference type="Proteomes" id="UP000694542">
    <property type="component" value="Unplaced"/>
</dbReference>
<dbReference type="Proteomes" id="UP000805418">
    <property type="component" value="Unplaced"/>
</dbReference>
<dbReference type="GO" id="GO:0005730">
    <property type="term" value="C:nucleolus"/>
    <property type="evidence" value="ECO:0007669"/>
    <property type="project" value="UniProtKB-SubCell"/>
</dbReference>
<dbReference type="GO" id="GO:0005654">
    <property type="term" value="C:nucleoplasm"/>
    <property type="evidence" value="ECO:0007669"/>
    <property type="project" value="UniProtKB-SubCell"/>
</dbReference>
<dbReference type="GO" id="GO:0005634">
    <property type="term" value="C:nucleus"/>
    <property type="evidence" value="ECO:0000318"/>
    <property type="project" value="GO_Central"/>
</dbReference>
<dbReference type="GO" id="GO:0033699">
    <property type="term" value="F:DNA 5'-adenosine monophosphate hydrolase activity"/>
    <property type="evidence" value="ECO:0000318"/>
    <property type="project" value="GO_Central"/>
</dbReference>
<dbReference type="GO" id="GO:0120108">
    <property type="term" value="F:DNA-3'-diphospho-5'-guanosine diphosphatase"/>
    <property type="evidence" value="ECO:0007669"/>
    <property type="project" value="UniProtKB-EC"/>
</dbReference>
<dbReference type="GO" id="GO:0003725">
    <property type="term" value="F:double-stranded RNA binding"/>
    <property type="evidence" value="ECO:0000318"/>
    <property type="project" value="GO_Central"/>
</dbReference>
<dbReference type="GO" id="GO:0030983">
    <property type="term" value="F:mismatched DNA binding"/>
    <property type="evidence" value="ECO:0000318"/>
    <property type="project" value="GO_Central"/>
</dbReference>
<dbReference type="GO" id="GO:1990165">
    <property type="term" value="F:single-strand break-containing DNA binding"/>
    <property type="evidence" value="ECO:0000318"/>
    <property type="project" value="GO_Central"/>
</dbReference>
<dbReference type="GO" id="GO:0003697">
    <property type="term" value="F:single-stranded DNA binding"/>
    <property type="evidence" value="ECO:0000318"/>
    <property type="project" value="GO_Central"/>
</dbReference>
<dbReference type="GO" id="GO:0008270">
    <property type="term" value="F:zinc ion binding"/>
    <property type="evidence" value="ECO:0007669"/>
    <property type="project" value="UniProtKB-KW"/>
</dbReference>
<dbReference type="GO" id="GO:0000012">
    <property type="term" value="P:single strand break repair"/>
    <property type="evidence" value="ECO:0000318"/>
    <property type="project" value="GO_Central"/>
</dbReference>
<dbReference type="CDD" id="cd01278">
    <property type="entry name" value="aprataxin_related"/>
    <property type="match status" value="1"/>
</dbReference>
<dbReference type="CDD" id="cd22735">
    <property type="entry name" value="FHA_APTX"/>
    <property type="match status" value="1"/>
</dbReference>
<dbReference type="FunFam" id="2.60.200.20:FF:000010">
    <property type="entry name" value="aprataxin isoform X1"/>
    <property type="match status" value="1"/>
</dbReference>
<dbReference type="FunFam" id="3.30.428.10:FF:000004">
    <property type="entry name" value="aprataxin isoform X2"/>
    <property type="match status" value="1"/>
</dbReference>
<dbReference type="Gene3D" id="2.60.200.20">
    <property type="match status" value="1"/>
</dbReference>
<dbReference type="Gene3D" id="3.30.428.10">
    <property type="entry name" value="HIT-like"/>
    <property type="match status" value="1"/>
</dbReference>
<dbReference type="InterPro" id="IPR041388">
    <property type="entry name" value="FHA_2"/>
</dbReference>
<dbReference type="InterPro" id="IPR047289">
    <property type="entry name" value="FHA_APTX"/>
</dbReference>
<dbReference type="InterPro" id="IPR019808">
    <property type="entry name" value="Histidine_triad_CS"/>
</dbReference>
<dbReference type="InterPro" id="IPR011146">
    <property type="entry name" value="HIT-like"/>
</dbReference>
<dbReference type="InterPro" id="IPR036265">
    <property type="entry name" value="HIT-like_sf"/>
</dbReference>
<dbReference type="InterPro" id="IPR008984">
    <property type="entry name" value="SMAD_FHA_dom_sf"/>
</dbReference>
<dbReference type="InterPro" id="IPR032566">
    <property type="entry name" value="Znf-C2HE"/>
</dbReference>
<dbReference type="InterPro" id="IPR013087">
    <property type="entry name" value="Znf_C2H2_type"/>
</dbReference>
<dbReference type="PANTHER" id="PTHR12486:SF4">
    <property type="entry name" value="APRATAXIN"/>
    <property type="match status" value="1"/>
</dbReference>
<dbReference type="PANTHER" id="PTHR12486">
    <property type="entry name" value="APRATAXIN-RELATED"/>
    <property type="match status" value="1"/>
</dbReference>
<dbReference type="Pfam" id="PF11969">
    <property type="entry name" value="DcpS_C"/>
    <property type="match status" value="1"/>
</dbReference>
<dbReference type="Pfam" id="PF17913">
    <property type="entry name" value="FHA_2"/>
    <property type="match status" value="1"/>
</dbReference>
<dbReference type="Pfam" id="PF16278">
    <property type="entry name" value="zf-C2HE"/>
    <property type="match status" value="1"/>
</dbReference>
<dbReference type="SUPFAM" id="SSF54197">
    <property type="entry name" value="HIT-like"/>
    <property type="match status" value="1"/>
</dbReference>
<dbReference type="SUPFAM" id="SSF49879">
    <property type="entry name" value="SMAD/FHA domain"/>
    <property type="match status" value="1"/>
</dbReference>
<dbReference type="PROSITE" id="PS00892">
    <property type="entry name" value="HIT_1"/>
    <property type="match status" value="1"/>
</dbReference>
<dbReference type="PROSITE" id="PS51084">
    <property type="entry name" value="HIT_2"/>
    <property type="match status" value="1"/>
</dbReference>
<dbReference type="PROSITE" id="PS00028">
    <property type="entry name" value="ZINC_FINGER_C2H2_1"/>
    <property type="match status" value="1"/>
</dbReference>